<gene>
    <name evidence="12 15" type="primary">Tox</name>
</gene>
<feature type="chain" id="PRO_0000244570" description="Thymocyte selection-associated high mobility group box protein TOX">
    <location>
        <begin position="1"/>
        <end position="526"/>
    </location>
</feature>
<feature type="DNA-binding region" description="HMG box" evidence="2">
    <location>
        <begin position="261"/>
        <end position="329"/>
    </location>
</feature>
<feature type="region of interest" description="Disordered" evidence="3">
    <location>
        <begin position="194"/>
        <end position="264"/>
    </location>
</feature>
<feature type="short sequence motif" description="Nuclear localization signal" evidence="1">
    <location>
        <begin position="237"/>
        <end position="256"/>
    </location>
</feature>
<feature type="compositionally biased region" description="Polar residues" evidence="3">
    <location>
        <begin position="194"/>
        <end position="203"/>
    </location>
</feature>
<feature type="compositionally biased region" description="Low complexity" evidence="3">
    <location>
        <begin position="209"/>
        <end position="220"/>
    </location>
</feature>
<feature type="compositionally biased region" description="Basic and acidic residues" evidence="3">
    <location>
        <begin position="228"/>
        <end position="245"/>
    </location>
</feature>
<feature type="compositionally biased region" description="Basic residues" evidence="3">
    <location>
        <begin position="246"/>
        <end position="256"/>
    </location>
</feature>
<feature type="splice variant" id="VSP_019598" description="In isoform 2." evidence="13">
    <original>I</original>
    <variation>V</variation>
    <location>
        <position position="232"/>
    </location>
</feature>
<feature type="splice variant" id="VSP_019599" description="In isoform 2." evidence="13">
    <location>
        <begin position="233"/>
        <end position="526"/>
    </location>
</feature>
<feature type="sequence conflict" description="In Ref. 2; BAC30091." evidence="14" ref="2">
    <original>L</original>
    <variation>Q</variation>
    <location>
        <position position="27"/>
    </location>
</feature>
<feature type="sequence conflict" description="In Ref. 3; AAH80732." evidence="14" ref="3">
    <original>E</original>
    <variation>D</variation>
    <location>
        <position position="140"/>
    </location>
</feature>
<feature type="helix" evidence="16">
    <location>
        <begin position="267"/>
        <end position="270"/>
    </location>
</feature>
<feature type="helix" evidence="16">
    <location>
        <begin position="272"/>
        <end position="282"/>
    </location>
</feature>
<feature type="helix" evidence="16">
    <location>
        <begin position="288"/>
        <end position="299"/>
    </location>
</feature>
<feature type="helix" evidence="16">
    <location>
        <begin position="304"/>
        <end position="332"/>
    </location>
</feature>
<keyword id="KW-0002">3D-structure</keyword>
<keyword id="KW-0025">Alternative splicing</keyword>
<keyword id="KW-0156">Chromatin regulator</keyword>
<keyword id="KW-0238">DNA-binding</keyword>
<keyword id="KW-0524">Neurogenesis</keyword>
<keyword id="KW-0539">Nucleus</keyword>
<keyword id="KW-1185">Reference proteome</keyword>
<keyword id="KW-0804">Transcription</keyword>
<keyword id="KW-0805">Transcription regulation</keyword>
<dbReference type="EMBL" id="AF472514">
    <property type="protein sequence ID" value="AAL78656.1"/>
    <property type="molecule type" value="mRNA"/>
</dbReference>
<dbReference type="EMBL" id="AK029694">
    <property type="protein sequence ID" value="BAC26568.1"/>
    <property type="molecule type" value="mRNA"/>
</dbReference>
<dbReference type="EMBL" id="AK038671">
    <property type="protein sequence ID" value="BAC30091.1"/>
    <property type="molecule type" value="mRNA"/>
</dbReference>
<dbReference type="EMBL" id="AK051947">
    <property type="protein sequence ID" value="BAC34818.1"/>
    <property type="molecule type" value="mRNA"/>
</dbReference>
<dbReference type="EMBL" id="BC080732">
    <property type="protein sequence ID" value="AAH80732.1"/>
    <property type="molecule type" value="mRNA"/>
</dbReference>
<dbReference type="CCDS" id="CCDS17953.1">
    <molecule id="Q66JW3-1"/>
</dbReference>
<dbReference type="RefSeq" id="NP_001364007.1">
    <molecule id="Q66JW3-1"/>
    <property type="nucleotide sequence ID" value="NM_001377078.1"/>
</dbReference>
<dbReference type="RefSeq" id="NP_001364008.1">
    <molecule id="Q66JW3-1"/>
    <property type="nucleotide sequence ID" value="NM_001377079.1"/>
</dbReference>
<dbReference type="RefSeq" id="NP_663757.3">
    <molecule id="Q66JW3-1"/>
    <property type="nucleotide sequence ID" value="NM_145711.4"/>
</dbReference>
<dbReference type="RefSeq" id="XP_006538007.1">
    <property type="nucleotide sequence ID" value="XM_006537944.3"/>
</dbReference>
<dbReference type="RefSeq" id="XP_006538008.1">
    <property type="nucleotide sequence ID" value="XM_006537945.2"/>
</dbReference>
<dbReference type="PDB" id="2CO9">
    <property type="method" value="NMR"/>
    <property type="chains" value="A=251-339"/>
</dbReference>
<dbReference type="PDBsum" id="2CO9"/>
<dbReference type="BMRB" id="Q66JW3"/>
<dbReference type="SMR" id="Q66JW3"/>
<dbReference type="BioGRID" id="232958">
    <property type="interactions" value="1"/>
</dbReference>
<dbReference type="FunCoup" id="Q66JW3">
    <property type="interactions" value="1722"/>
</dbReference>
<dbReference type="STRING" id="10090.ENSMUSP00000037966"/>
<dbReference type="GlyGen" id="Q66JW3">
    <property type="glycosylation" value="2 sites"/>
</dbReference>
<dbReference type="iPTMnet" id="Q66JW3"/>
<dbReference type="PhosphoSitePlus" id="Q66JW3"/>
<dbReference type="jPOST" id="Q66JW3"/>
<dbReference type="PaxDb" id="10090-ENSMUSP00000037966"/>
<dbReference type="PeptideAtlas" id="Q66JW3"/>
<dbReference type="ProteomicsDB" id="258955">
    <molecule id="Q66JW3-1"/>
</dbReference>
<dbReference type="ProteomicsDB" id="258956">
    <molecule id="Q66JW3-2"/>
</dbReference>
<dbReference type="Antibodypedia" id="11831">
    <property type="antibodies" value="156 antibodies from 31 providers"/>
</dbReference>
<dbReference type="DNASU" id="252838"/>
<dbReference type="Ensembl" id="ENSMUST00000039987.4">
    <molecule id="Q66JW3-1"/>
    <property type="protein sequence ID" value="ENSMUSP00000037966.4"/>
    <property type="gene ID" value="ENSMUSG00000041272.12"/>
</dbReference>
<dbReference type="GeneID" id="252838"/>
<dbReference type="KEGG" id="mmu:252838"/>
<dbReference type="UCSC" id="uc008rxs.2">
    <molecule id="Q66JW3-1"/>
    <property type="organism name" value="mouse"/>
</dbReference>
<dbReference type="UCSC" id="uc008rxt.1">
    <molecule id="Q66JW3-2"/>
    <property type="organism name" value="mouse"/>
</dbReference>
<dbReference type="AGR" id="MGI:2181659"/>
<dbReference type="CTD" id="9760"/>
<dbReference type="MGI" id="MGI:2181659">
    <property type="gene designation" value="Tox"/>
</dbReference>
<dbReference type="VEuPathDB" id="HostDB:ENSMUSG00000041272"/>
<dbReference type="eggNOG" id="KOG0381">
    <property type="taxonomic scope" value="Eukaryota"/>
</dbReference>
<dbReference type="GeneTree" id="ENSGT00940000159497"/>
<dbReference type="HOGENOM" id="CLU_030650_2_0_1"/>
<dbReference type="InParanoid" id="Q66JW3"/>
<dbReference type="OMA" id="QPGMSPH"/>
<dbReference type="OrthoDB" id="10027956at2759"/>
<dbReference type="PhylomeDB" id="Q66JW3"/>
<dbReference type="TreeFam" id="TF106481"/>
<dbReference type="BioGRID-ORCS" id="252838">
    <property type="hits" value="0 hits in 78 CRISPR screens"/>
</dbReference>
<dbReference type="ChiTaRS" id="Tox">
    <property type="organism name" value="mouse"/>
</dbReference>
<dbReference type="EvolutionaryTrace" id="Q66JW3"/>
<dbReference type="PRO" id="PR:Q66JW3"/>
<dbReference type="Proteomes" id="UP000000589">
    <property type="component" value="Chromosome 4"/>
</dbReference>
<dbReference type="RNAct" id="Q66JW3">
    <property type="molecule type" value="protein"/>
</dbReference>
<dbReference type="Bgee" id="ENSMUSG00000041272">
    <property type="expression patterns" value="Expressed in rib and 263 other cell types or tissues"/>
</dbReference>
<dbReference type="GO" id="GO:0005634">
    <property type="term" value="C:nucleus"/>
    <property type="evidence" value="ECO:0000314"/>
    <property type="project" value="UniProtKB"/>
</dbReference>
<dbReference type="GO" id="GO:0031490">
    <property type="term" value="F:chromatin DNA binding"/>
    <property type="evidence" value="ECO:0000314"/>
    <property type="project" value="UniProtKB"/>
</dbReference>
<dbReference type="GO" id="GO:0043373">
    <property type="term" value="P:CD4-positive, alpha-beta T cell lineage commitment"/>
    <property type="evidence" value="ECO:0000315"/>
    <property type="project" value="UniProtKB"/>
</dbReference>
<dbReference type="GO" id="GO:0002362">
    <property type="term" value="P:CD4-positive, CD25-positive, alpha-beta regulatory T cell lineage commitment"/>
    <property type="evidence" value="ECO:0000315"/>
    <property type="project" value="UniProtKB"/>
</dbReference>
<dbReference type="GO" id="GO:0043375">
    <property type="term" value="P:CD8-positive, alpha-beta T cell lineage commitment"/>
    <property type="evidence" value="ECO:0000315"/>
    <property type="project" value="UniProtKB"/>
</dbReference>
<dbReference type="GO" id="GO:0021895">
    <property type="term" value="P:cerebral cortex neuron differentiation"/>
    <property type="evidence" value="ECO:0000315"/>
    <property type="project" value="UniProtKB"/>
</dbReference>
<dbReference type="GO" id="GO:0006325">
    <property type="term" value="P:chromatin organization"/>
    <property type="evidence" value="ECO:0007669"/>
    <property type="project" value="UniProtKB-KW"/>
</dbReference>
<dbReference type="GO" id="GO:0048535">
    <property type="term" value="P:lymph node development"/>
    <property type="evidence" value="ECO:0000315"/>
    <property type="project" value="MGI"/>
</dbReference>
<dbReference type="GO" id="GO:0030098">
    <property type="term" value="P:lymphocyte differentiation"/>
    <property type="evidence" value="ECO:0000315"/>
    <property type="project" value="MGI"/>
</dbReference>
<dbReference type="GO" id="GO:0001779">
    <property type="term" value="P:natural killer cell differentiation"/>
    <property type="evidence" value="ECO:0007669"/>
    <property type="project" value="Ensembl"/>
</dbReference>
<dbReference type="GO" id="GO:0002364">
    <property type="term" value="P:NK T cell lineage commitment"/>
    <property type="evidence" value="ECO:0000315"/>
    <property type="project" value="UniProtKB"/>
</dbReference>
<dbReference type="GO" id="GO:0048541">
    <property type="term" value="P:Peyer's patch development"/>
    <property type="evidence" value="ECO:0000315"/>
    <property type="project" value="MGI"/>
</dbReference>
<dbReference type="GO" id="GO:0032825">
    <property type="term" value="P:positive regulation of natural killer cell differentiation"/>
    <property type="evidence" value="ECO:0000315"/>
    <property type="project" value="MGI"/>
</dbReference>
<dbReference type="GO" id="GO:2000179">
    <property type="term" value="P:positive regulation of neural precursor cell proliferation"/>
    <property type="evidence" value="ECO:0000315"/>
    <property type="project" value="UniProtKB"/>
</dbReference>
<dbReference type="GO" id="GO:0010976">
    <property type="term" value="P:positive regulation of neuron projection development"/>
    <property type="evidence" value="ECO:0000315"/>
    <property type="project" value="UniProtKB"/>
</dbReference>
<dbReference type="GO" id="GO:0045944">
    <property type="term" value="P:positive regulation of transcription by RNA polymerase II"/>
    <property type="evidence" value="ECO:0000315"/>
    <property type="project" value="UniProtKB"/>
</dbReference>
<dbReference type="GO" id="GO:1902232">
    <property type="term" value="P:regulation of positive thymic T cell selection"/>
    <property type="evidence" value="ECO:0000315"/>
    <property type="project" value="UniProtKB"/>
</dbReference>
<dbReference type="CDD" id="cd21995">
    <property type="entry name" value="HMG-box_TOX-like"/>
    <property type="match status" value="1"/>
</dbReference>
<dbReference type="FunFam" id="1.10.30.10:FF:000005">
    <property type="entry name" value="TOX high mobility group box family member 3"/>
    <property type="match status" value="1"/>
</dbReference>
<dbReference type="Gene3D" id="1.10.30.10">
    <property type="entry name" value="High mobility group box domain"/>
    <property type="match status" value="1"/>
</dbReference>
<dbReference type="InterPro" id="IPR009071">
    <property type="entry name" value="HMG_box_dom"/>
</dbReference>
<dbReference type="InterPro" id="IPR036910">
    <property type="entry name" value="HMG_box_dom_sf"/>
</dbReference>
<dbReference type="InterPro" id="IPR051365">
    <property type="entry name" value="TOX_HMG-box_domain"/>
</dbReference>
<dbReference type="PANTHER" id="PTHR45781">
    <property type="entry name" value="AGAP000281-PA"/>
    <property type="match status" value="1"/>
</dbReference>
<dbReference type="PANTHER" id="PTHR45781:SF4">
    <property type="entry name" value="THYMOCYTE SELECTION-ASSOCIATED HIGH MOBILITY GROUP BOX PROTEIN TOX"/>
    <property type="match status" value="1"/>
</dbReference>
<dbReference type="Pfam" id="PF00505">
    <property type="entry name" value="HMG_box"/>
    <property type="match status" value="1"/>
</dbReference>
<dbReference type="PRINTS" id="PR00886">
    <property type="entry name" value="HIGHMOBLTY12"/>
</dbReference>
<dbReference type="SMART" id="SM00398">
    <property type="entry name" value="HMG"/>
    <property type="match status" value="1"/>
</dbReference>
<dbReference type="SUPFAM" id="SSF47095">
    <property type="entry name" value="HMG-box"/>
    <property type="match status" value="1"/>
</dbReference>
<dbReference type="PROSITE" id="PS50118">
    <property type="entry name" value="HMG_BOX_2"/>
    <property type="match status" value="1"/>
</dbReference>
<name>TOX_MOUSE</name>
<sequence length="526" mass="57203">MDVRFYPPPAQPAAAPAAPCLGPSPCLDPYYCNKFDGENMYMSMTEPSQDYVPASQSYPGPSLESEDFNIPPITPPSLPDHSLVHLNEVESGYHSLCHPMNHNGLLPFHPQTMDLPEITVSNMLGQDGALLSNSISVMQEIGNAEGAQYSSHPQMAAMRPRGQPTDIRQQASMMQPGQLTTINQSQLSAQLGLNMGGTNVAHNSPSPPGSKSATPSPSSSVHEDECEDASKINGGEKRPASDMGKKPKTPKKKKKKDPNEPQKPVSAYALFFRDTQAAIKGQNPNATFGEVSKIVASMWDGLGEEQKQVYKKKTEAAKKEYLKQLAAYRASLVSKSYTDPVDVKTSQPPQLVNSKPSVFHGPSQAHSALYLSSHYHQQPGMTPQLTAMHPSLPRNIAPKPNNQMPVTVSIANMAVSPPPPLQISPPLHQHLSMQQHQSLAMQQPLGSQLPMQVQTALHSPTMQQGFTLQPDYQTIINPTSTAAQVVTQAMEYVRSGCRNPPPQPVDWSTDYCSSGGMQRDKALYLT</sequence>
<organism>
    <name type="scientific">Mus musculus</name>
    <name type="common">Mouse</name>
    <dbReference type="NCBI Taxonomy" id="10090"/>
    <lineage>
        <taxon>Eukaryota</taxon>
        <taxon>Metazoa</taxon>
        <taxon>Chordata</taxon>
        <taxon>Craniata</taxon>
        <taxon>Vertebrata</taxon>
        <taxon>Euteleostomi</taxon>
        <taxon>Mammalia</taxon>
        <taxon>Eutheria</taxon>
        <taxon>Euarchontoglires</taxon>
        <taxon>Glires</taxon>
        <taxon>Rodentia</taxon>
        <taxon>Myomorpha</taxon>
        <taxon>Muroidea</taxon>
        <taxon>Muridae</taxon>
        <taxon>Murinae</taxon>
        <taxon>Mus</taxon>
        <taxon>Mus</taxon>
    </lineage>
</organism>
<protein>
    <recommendedName>
        <fullName evidence="12">Thymocyte selection-associated high mobility group box protein TOX</fullName>
    </recommendedName>
    <alternativeName>
        <fullName evidence="12">Thymus high mobility group box protein TOX</fullName>
    </alternativeName>
</protein>
<proteinExistence type="evidence at protein level"/>
<accession>Q66JW3</accession>
<accession>Q8BKH9</accession>
<accession>Q8BYQ5</accession>
<accession>Q8R4H0</accession>
<comment type="function">
    <text evidence="4 5 6 7 8 9 10 11">Transcriptional regulator with a major role in neural stem cell commitment and corticogenesis as well as in lymphoid cell development and lymphoid tissue organogenesis (PubMed:11850626, PubMed:15078895, PubMed:18195075, PubMed:20818394, PubMed:25527292, PubMed:25915732). Binds to GC-rich DNA sequences in the proximity of transcription start sites and may alter chromatin structure, modifying access of transcription factors to DNA (PubMed:25527292, PubMed:31207603, PubMed:31207604). During cortical development, controls the neural stem cell pool by inhibiting the switch from proliferative to differentiating progenitors. Beyond progenitor cells, promotes neurite outgrowth in newborn neurons migrating to reach the cortical plate. May activate or repress critical genes for neural stem cell fate such as SOX2, EOMES and ROBO2 (PubMed:25527292). Plays an essential role in the development of lymphoid tissue-inducer (LTi) cells, a subset necessary for the formation of secondary lymphoid organs: peripheral lymph nodes and Peyer's patches (PubMed:20818394). Acts as a developmental checkpoint and regulates thymocyte positive selection toward T cell lineage commitment (PubMed:11850626, PubMed:18195075). Required for the development of various T cell subsets, including CD4-positive helper T cells, CD8-positive cytotoxic T cells, regulatory T cells and CD1D-dependent natural killer T (NKT) cells (PubMed:15078895, PubMed:18195075). Required for the differentiation of common lymphoid progenitors (CMP) to innate lymphoid cells (ILC). May regulate the NOTCH-mediated gene program, promoting differentiation of the ILC lineage (PubMed:25915732). Required at the progenitor phase of NK cell development in the bone marrow to specify NK cell lineage commitment (PubMed:20818394). Upon chronic antigen stimulation, diverts T cell development by promoting the generation of exhaustive T cells, while suppressing effector and memory T cell programming. May regulate the expression of genes encoding inhibitory receptors such as PDCD1 and induce the exhaustion program, to prevent the overstimulation of T cells and activation-induced cell death (PubMed:31207603, PubMed:31207604).</text>
</comment>
<comment type="subunit">
    <text evidence="10">Interacts with HBO1 complex composed at least of KAT7/HBO1, ING4, MEAF6, and JADE2; this complex is involved in histone acetylation. Interacts with DNMT1, LEO1, PAF1, SAP130 and SIN3A; these interactors regulate chromatin remodeling. Interacts with an array of proteins involved in RNA processing and translation and DNA replication.</text>
</comment>
<comment type="subcellular location">
    <subcellularLocation>
        <location evidence="2 4">Nucleus</location>
    </subcellularLocation>
</comment>
<comment type="alternative products">
    <event type="alternative splicing"/>
    <isoform>
        <id>Q66JW3-1</id>
        <name>1</name>
        <sequence type="displayed"/>
    </isoform>
    <isoform>
        <id>Q66JW3-2</id>
        <name>2</name>
        <sequence type="described" ref="VSP_019598 VSP_019599"/>
    </isoform>
</comment>
<comment type="tissue specificity">
    <text evidence="4 5 7 8 9 11">Expressed in neurons of the subventricular zone (at protein level) (PubMed:25527292). Expressed in distinct subpopulations of thymocytes undergoing positive selection: double CD4-positive CD8-positive (DP) cells, CD4-positive CD8-low transitional cells and in single CD4-positive and CD8-positive cells (at protein level) (PubMed:11850626, PubMed:15078895). Expressed in ILC progenitors and mature ILC subsets: ILC1, ILC2 and ILC3 (at protein level) (PubMed:25915732). Expressed in lymphoid tissue-inducer cells and bone marrow NK cell subsets (PubMed:20818394). Abundant in thymus, liver and brain. Also detected in small intestine, spleen, stomach and testis (PubMed:11850626). Highly expressed in tumor-infiltrating CD8-positive T cells (at protein level) (PubMed:31207604).</text>
</comment>
<comment type="developmental stage">
    <text evidence="8">In the developing brain, expressed at embryonic day 9.5 dpc in neuroepithelium, displaying a rostral-high/ caudal-low and lateral-high/medial-low expression pattern. Abundant at 15.5 dpc in progenitors of the ventricular zone and differentiated neurons in the cortical plate. The lateral-medial gradient spread further in all cells of the ventricular zone of the lateral cortex by 18.5 dpc (at protein level).</text>
</comment>
<comment type="induction">
    <text evidence="4 5 7">Transiently up-regulated during key developmental transition of immune cell subsets, likely marking a developmental checkpoint. Up-regulated during beta and positive selection of developing thymocytes, upon activation of pre-T cell receptor or T cell receptor in a calcineurin-dependent manner (PubMed:11850626, PubMed:15078895). Low expression is detected in precursor bone marrow NK cells, then is up-regulated in immature and mature bone marrow NK cells and later down-regulated in splenic mature NK cells (PubMed:20818394).</text>
</comment>
<comment type="induction">
    <text evidence="10">(Microbial infection) Up-regulated in LCMV-specific CD8-positive T cells. Expressed at high levels in exhausted T cells during chronic infection.</text>
</comment>
<comment type="domain">
    <text evidence="6">The HMG box is critical for TOX-dependent CD4-positive T cell lineage commitment.</text>
</comment>
<comment type="disruption phenotype">
    <text evidence="6 7">Mutant mice lack lymph nodes. The development of Peyer's patches is compromised, detectable only in some mutants. Peyer's patches are much smaller in size less abundant when compared to wild-type littermates. T cell lymphopenia is a hallmark phenotype of TOX-deficient mice.</text>
</comment>
<comment type="similarity">
    <text evidence="14">Belongs to the high motility group (HMG) box superfamily.</text>
</comment>
<evidence type="ECO:0000255" key="1"/>
<evidence type="ECO:0000255" key="2">
    <source>
        <dbReference type="PROSITE-ProRule" id="PRU00267"/>
    </source>
</evidence>
<evidence type="ECO:0000256" key="3">
    <source>
        <dbReference type="SAM" id="MobiDB-lite"/>
    </source>
</evidence>
<evidence type="ECO:0000269" key="4">
    <source>
    </source>
</evidence>
<evidence type="ECO:0000269" key="5">
    <source>
    </source>
</evidence>
<evidence type="ECO:0000269" key="6">
    <source>
    </source>
</evidence>
<evidence type="ECO:0000269" key="7">
    <source>
    </source>
</evidence>
<evidence type="ECO:0000269" key="8">
    <source>
    </source>
</evidence>
<evidence type="ECO:0000269" key="9">
    <source>
    </source>
</evidence>
<evidence type="ECO:0000269" key="10">
    <source>
    </source>
</evidence>
<evidence type="ECO:0000269" key="11">
    <source>
    </source>
</evidence>
<evidence type="ECO:0000303" key="12">
    <source>
    </source>
</evidence>
<evidence type="ECO:0000303" key="13">
    <source>
    </source>
</evidence>
<evidence type="ECO:0000305" key="14"/>
<evidence type="ECO:0000312" key="15">
    <source>
        <dbReference type="MGI" id="MGI:2181659"/>
    </source>
</evidence>
<evidence type="ECO:0007829" key="16">
    <source>
        <dbReference type="PDB" id="2CO9"/>
    </source>
</evidence>
<reference key="1">
    <citation type="journal article" date="2002" name="Nat. Immunol.">
        <title>TOX: an HMG box protein implicated in the regulation of thymocyte selection.</title>
        <authorList>
            <person name="Wilkinson B."/>
            <person name="Chen J.-Y."/>
            <person name="Han P."/>
            <person name="Rufner K.M."/>
            <person name="Goularte O.D."/>
            <person name="Kaye J."/>
        </authorList>
    </citation>
    <scope>NUCLEOTIDE SEQUENCE [MRNA] (ISOFORM 1)</scope>
    <scope>FUNCTION</scope>
    <scope>SUBCELLULAR LOCATION</scope>
    <scope>INDUCTION</scope>
    <scope>TISSUE SPECIFICITY</scope>
    <source>
        <strain>C57BL/6 X 129S2</strain>
        <tissue>Thymus</tissue>
    </source>
</reference>
<reference key="2">
    <citation type="journal article" date="2005" name="Science">
        <title>The transcriptional landscape of the mammalian genome.</title>
        <authorList>
            <person name="Carninci P."/>
            <person name="Kasukawa T."/>
            <person name="Katayama S."/>
            <person name="Gough J."/>
            <person name="Frith M.C."/>
            <person name="Maeda N."/>
            <person name="Oyama R."/>
            <person name="Ravasi T."/>
            <person name="Lenhard B."/>
            <person name="Wells C."/>
            <person name="Kodzius R."/>
            <person name="Shimokawa K."/>
            <person name="Bajic V.B."/>
            <person name="Brenner S.E."/>
            <person name="Batalov S."/>
            <person name="Forrest A.R."/>
            <person name="Zavolan M."/>
            <person name="Davis M.J."/>
            <person name="Wilming L.G."/>
            <person name="Aidinis V."/>
            <person name="Allen J.E."/>
            <person name="Ambesi-Impiombato A."/>
            <person name="Apweiler R."/>
            <person name="Aturaliya R.N."/>
            <person name="Bailey T.L."/>
            <person name="Bansal M."/>
            <person name="Baxter L."/>
            <person name="Beisel K.W."/>
            <person name="Bersano T."/>
            <person name="Bono H."/>
            <person name="Chalk A.M."/>
            <person name="Chiu K.P."/>
            <person name="Choudhary V."/>
            <person name="Christoffels A."/>
            <person name="Clutterbuck D.R."/>
            <person name="Crowe M.L."/>
            <person name="Dalla E."/>
            <person name="Dalrymple B.P."/>
            <person name="de Bono B."/>
            <person name="Della Gatta G."/>
            <person name="di Bernardo D."/>
            <person name="Down T."/>
            <person name="Engstrom P."/>
            <person name="Fagiolini M."/>
            <person name="Faulkner G."/>
            <person name="Fletcher C.F."/>
            <person name="Fukushima T."/>
            <person name="Furuno M."/>
            <person name="Futaki S."/>
            <person name="Gariboldi M."/>
            <person name="Georgii-Hemming P."/>
            <person name="Gingeras T.R."/>
            <person name="Gojobori T."/>
            <person name="Green R.E."/>
            <person name="Gustincich S."/>
            <person name="Harbers M."/>
            <person name="Hayashi Y."/>
            <person name="Hensch T.K."/>
            <person name="Hirokawa N."/>
            <person name="Hill D."/>
            <person name="Huminiecki L."/>
            <person name="Iacono M."/>
            <person name="Ikeo K."/>
            <person name="Iwama A."/>
            <person name="Ishikawa T."/>
            <person name="Jakt M."/>
            <person name="Kanapin A."/>
            <person name="Katoh M."/>
            <person name="Kawasawa Y."/>
            <person name="Kelso J."/>
            <person name="Kitamura H."/>
            <person name="Kitano H."/>
            <person name="Kollias G."/>
            <person name="Krishnan S.P."/>
            <person name="Kruger A."/>
            <person name="Kummerfeld S.K."/>
            <person name="Kurochkin I.V."/>
            <person name="Lareau L.F."/>
            <person name="Lazarevic D."/>
            <person name="Lipovich L."/>
            <person name="Liu J."/>
            <person name="Liuni S."/>
            <person name="McWilliam S."/>
            <person name="Madan Babu M."/>
            <person name="Madera M."/>
            <person name="Marchionni L."/>
            <person name="Matsuda H."/>
            <person name="Matsuzawa S."/>
            <person name="Miki H."/>
            <person name="Mignone F."/>
            <person name="Miyake S."/>
            <person name="Morris K."/>
            <person name="Mottagui-Tabar S."/>
            <person name="Mulder N."/>
            <person name="Nakano N."/>
            <person name="Nakauchi H."/>
            <person name="Ng P."/>
            <person name="Nilsson R."/>
            <person name="Nishiguchi S."/>
            <person name="Nishikawa S."/>
            <person name="Nori F."/>
            <person name="Ohara O."/>
            <person name="Okazaki Y."/>
            <person name="Orlando V."/>
            <person name="Pang K.C."/>
            <person name="Pavan W.J."/>
            <person name="Pavesi G."/>
            <person name="Pesole G."/>
            <person name="Petrovsky N."/>
            <person name="Piazza S."/>
            <person name="Reed J."/>
            <person name="Reid J.F."/>
            <person name="Ring B.Z."/>
            <person name="Ringwald M."/>
            <person name="Rost B."/>
            <person name="Ruan Y."/>
            <person name="Salzberg S.L."/>
            <person name="Sandelin A."/>
            <person name="Schneider C."/>
            <person name="Schoenbach C."/>
            <person name="Sekiguchi K."/>
            <person name="Semple C.A."/>
            <person name="Seno S."/>
            <person name="Sessa L."/>
            <person name="Sheng Y."/>
            <person name="Shibata Y."/>
            <person name="Shimada H."/>
            <person name="Shimada K."/>
            <person name="Silva D."/>
            <person name="Sinclair B."/>
            <person name="Sperling S."/>
            <person name="Stupka E."/>
            <person name="Sugiura K."/>
            <person name="Sultana R."/>
            <person name="Takenaka Y."/>
            <person name="Taki K."/>
            <person name="Tammoja K."/>
            <person name="Tan S.L."/>
            <person name="Tang S."/>
            <person name="Taylor M.S."/>
            <person name="Tegner J."/>
            <person name="Teichmann S.A."/>
            <person name="Ueda H.R."/>
            <person name="van Nimwegen E."/>
            <person name="Verardo R."/>
            <person name="Wei C.L."/>
            <person name="Yagi K."/>
            <person name="Yamanishi H."/>
            <person name="Zabarovsky E."/>
            <person name="Zhu S."/>
            <person name="Zimmer A."/>
            <person name="Hide W."/>
            <person name="Bult C."/>
            <person name="Grimmond S.M."/>
            <person name="Teasdale R.D."/>
            <person name="Liu E.T."/>
            <person name="Brusic V."/>
            <person name="Quackenbush J."/>
            <person name="Wahlestedt C."/>
            <person name="Mattick J.S."/>
            <person name="Hume D.A."/>
            <person name="Kai C."/>
            <person name="Sasaki D."/>
            <person name="Tomaru Y."/>
            <person name="Fukuda S."/>
            <person name="Kanamori-Katayama M."/>
            <person name="Suzuki M."/>
            <person name="Aoki J."/>
            <person name="Arakawa T."/>
            <person name="Iida J."/>
            <person name="Imamura K."/>
            <person name="Itoh M."/>
            <person name="Kato T."/>
            <person name="Kawaji H."/>
            <person name="Kawagashira N."/>
            <person name="Kawashima T."/>
            <person name="Kojima M."/>
            <person name="Kondo S."/>
            <person name="Konno H."/>
            <person name="Nakano K."/>
            <person name="Ninomiya N."/>
            <person name="Nishio T."/>
            <person name="Okada M."/>
            <person name="Plessy C."/>
            <person name="Shibata K."/>
            <person name="Shiraki T."/>
            <person name="Suzuki S."/>
            <person name="Tagami M."/>
            <person name="Waki K."/>
            <person name="Watahiki A."/>
            <person name="Okamura-Oho Y."/>
            <person name="Suzuki H."/>
            <person name="Kawai J."/>
            <person name="Hayashizaki Y."/>
        </authorList>
    </citation>
    <scope>NUCLEOTIDE SEQUENCE [LARGE SCALE MRNA] (ISOFORMS 1 AND 2)</scope>
    <source>
        <strain>C57BL/6J</strain>
        <tissue>Embryonic eye</tissue>
        <tissue>Hypothalamus</tissue>
        <tissue>Testis</tissue>
    </source>
</reference>
<reference key="3">
    <citation type="journal article" date="2004" name="Genome Res.">
        <title>The status, quality, and expansion of the NIH full-length cDNA project: the Mammalian Gene Collection (MGC).</title>
        <authorList>
            <consortium name="The MGC Project Team"/>
        </authorList>
    </citation>
    <scope>NUCLEOTIDE SEQUENCE [LARGE SCALE MRNA] (ISOFORM 1)</scope>
    <source>
        <tissue>Embryonic limb</tissue>
    </source>
</reference>
<reference key="4">
    <citation type="journal article" date="2004" name="J. Exp. Med.">
        <title>TOX provides a link between calcineurin activation and CD8 lineage commitment.</title>
        <authorList>
            <person name="Aliahmad P."/>
            <person name="O'Flaherty E."/>
            <person name="Han P."/>
            <person name="Goularte O.D."/>
            <person name="Wilkinson B."/>
            <person name="Satake M."/>
            <person name="Molkentin J.D."/>
            <person name="Kaye J."/>
        </authorList>
    </citation>
    <scope>FUNCTION</scope>
    <scope>INDUCTION</scope>
    <scope>TISSUE SPECIFICITY</scope>
</reference>
<reference key="5">
    <citation type="journal article" date="2008" name="J. Exp. Med.">
        <title>Development of all CD4 T lineages requires nuclear factor TOX.</title>
        <authorList>
            <person name="Aliahmad P."/>
            <person name="Kaye J."/>
        </authorList>
    </citation>
    <scope>FUNCTION</scope>
    <scope>DOMAIN</scope>
    <scope>DISRUPTION PHENOTYPE</scope>
</reference>
<reference key="6">
    <citation type="journal article" date="2010" name="Nat. Immunol.">
        <title>Shared dependence on the DNA-binding factor TOX for the development of lymphoid tissue-inducer cell and NK cell lineages.</title>
        <authorList>
            <person name="Aliahmad P."/>
            <person name="de la Torre B."/>
            <person name="Kaye J."/>
        </authorList>
    </citation>
    <scope>FUNCTION</scope>
    <scope>DISRUPTION PHENOTYPE</scope>
    <scope>TISSUE SPECIFICITY</scope>
    <scope>INDUCTION</scope>
</reference>
<reference key="7">
    <citation type="journal article" date="2015" name="EMBO J.">
        <title>Tox: a multifunctional transcription factor and novel regulator of mammalian corticogenesis.</title>
        <authorList>
            <person name="Artegiani B."/>
            <person name="de Jesus Domingues A.M."/>
            <person name="Bragado Alonso S."/>
            <person name="Brandl E."/>
            <person name="Massalini S."/>
            <person name="Dahl A."/>
            <person name="Calegari F."/>
        </authorList>
    </citation>
    <scope>FUNCTION</scope>
    <scope>TISSUE SPECIFICITY</scope>
    <scope>DEVELOPMENTAL STAGE</scope>
</reference>
<reference key="8">
    <citation type="journal article" date="2015" name="Nat. Immunol.">
        <title>The development of innate lymphoid cells requires TOX-dependent generation of a common innate lymphoid cell progenitor.</title>
        <authorList>
            <person name="Seehus C.R."/>
            <person name="Aliahmad P."/>
            <person name="de la Torre B."/>
            <person name="Iliev I.D."/>
            <person name="Spurka L."/>
            <person name="Funari V.A."/>
            <person name="Kaye J."/>
        </authorList>
    </citation>
    <scope>FUNCTION</scope>
    <scope>TISSUE SPECIFICITY</scope>
</reference>
<reference key="9">
    <citation type="journal article" date="2019" name="Nature">
        <title>TOX transcriptionally and epigenetically programs CD8+ T cell exhaustion.</title>
        <authorList>
            <person name="Khan O."/>
            <person name="Giles J.R."/>
            <person name="McDonald S."/>
            <person name="Manne S."/>
            <person name="Ngiow S.F."/>
            <person name="Patel K.P."/>
            <person name="Werner M.T."/>
            <person name="Huang A.C."/>
            <person name="Alexander K.A."/>
            <person name="Wu J.E."/>
            <person name="Attanasio J."/>
            <person name="Yan P."/>
            <person name="George S.M."/>
            <person name="Bengsch B."/>
            <person name="Staupe R.P."/>
            <person name="Donahue G."/>
            <person name="Xu W."/>
            <person name="Amaravadi R.K."/>
            <person name="Xu X."/>
            <person name="Karakousis G.C."/>
            <person name="Mitchell T.C."/>
            <person name="Schuchter L.M."/>
            <person name="Kaye J."/>
            <person name="Berger S.L."/>
            <person name="Wherry E.J."/>
        </authorList>
    </citation>
    <scope>FUNCTION</scope>
    <scope>INDUCTION (MICROBIAL INFECTION)</scope>
    <scope>INTERACTION WITH HBO1 COMPLEX; DNMT1; LEO1; PAF1; SAP130 AND SIN3A</scope>
</reference>
<reference key="10">
    <citation type="journal article" date="2019" name="Nature">
        <title>TOX is a critical regulator of tumour-specific T cell differentiation.</title>
        <authorList>
            <person name="Scott A.C."/>
            <person name="Duendar F."/>
            <person name="Zumbo P."/>
            <person name="Chandran S.S."/>
            <person name="Klebanoff C.A."/>
            <person name="Shakiba M."/>
            <person name="Trivedi P."/>
            <person name="Menocal L."/>
            <person name="Appleby H."/>
            <person name="Camara S."/>
            <person name="Zamarin D."/>
            <person name="Walther T."/>
            <person name="Snyder A."/>
            <person name="Femia M.R."/>
            <person name="Comen E.A."/>
            <person name="Wen H.Y."/>
            <person name="Hellmann M.D."/>
            <person name="Anandasabapathy N."/>
            <person name="Liu Y."/>
            <person name="Altorki N.K."/>
            <person name="Lauer P."/>
            <person name="Levy O."/>
            <person name="Glickman M.S."/>
            <person name="Kaye J."/>
            <person name="Betel D."/>
            <person name="Philip M."/>
            <person name="Schietinger A."/>
        </authorList>
    </citation>
    <scope>FUNCTION</scope>
    <scope>TISSUE SPECIFICITY</scope>
</reference>
<reference key="11">
    <citation type="submission" date="2005-11" db="PDB data bank">
        <title>Solution structure of the HMG-box domain of thymus high mobility group box protein TOX from mouse.</title>
        <authorList>
            <consortium name="RIKEN structural genomics initiative (RSGI)"/>
        </authorList>
    </citation>
    <scope>STRUCTURE BY NMR OF 251-339</scope>
</reference>